<sequence length="675" mass="74315">MELSLSTSSASPAVLRRQASPLLHKQQVLGVSFASALKPGGGALRFPSRRPLPRPITCSASPSTAEPASEVKKKQLDRRDNVRNIAIVAHVDHGKTTLVDSMLRQAKVFRDNQVMQERIMDSNDLERERGITILSKNTSITYKNTKVNIIDTPGHSDFGGEVERVLNMVDGVLLVVDSVEGPMPQTRFVLKKALEFGHAVVVVVNKIDRPSARPEFVVNSTFELFIELNATDEQCDFQAIYASGIKGKAGLSPDDLAEDLGPLFEAIIRCVPGPNIEKDGALQMLATNIEYDEHKGRIAIGRLHAGVLRKGMDVRVCTSEDSCRFARVSELFVYEKFYRVPTDSVEAGDICAVCGIDNIQIGETIADKVHGKPLPTIKVEEPTVKMSFSVNTSPFSGREGKYVTSRNLRDRLNRELERNLAMKVEDGETADTFIVSGRGTLHITILIENMRREGYEFMVGPPKVINKRVNDKLLEPYEIATVEVPEAHMGPVVELLGKRRGQMFDMQGVGSEGTTFLRYKIPTRGLLGLRNAILTASRGTAILNTVFDSYGPWAGDISTRDLGSLVAFEDGTSTSYALASAQERGQMFVGSGVDVYKGQIVGIHQRPGDLGLNICKKKAATNIRSNKDVTVILDTPLTYSLDDCIEYIEEDELVEVTPSSIRMCKNQKMAKKGRQ</sequence>
<dbReference type="EMBL" id="AB006704">
    <property type="protein sequence ID" value="BAB08691.1"/>
    <property type="status" value="ALT_SEQ"/>
    <property type="molecule type" value="Genomic_DNA"/>
</dbReference>
<dbReference type="EMBL" id="CP002688">
    <property type="protein sequence ID" value="AED91922.1"/>
    <property type="molecule type" value="Genomic_DNA"/>
</dbReference>
<dbReference type="EMBL" id="AY059943">
    <property type="protein sequence ID" value="AAL24425.1"/>
    <property type="status" value="ALT_INIT"/>
    <property type="molecule type" value="mRNA"/>
</dbReference>
<dbReference type="EMBL" id="BT001186">
    <property type="protein sequence ID" value="AAN65073.1"/>
    <property type="molecule type" value="mRNA"/>
</dbReference>
<dbReference type="RefSeq" id="NP_851035.1">
    <molecule id="F4K410-1"/>
    <property type="nucleotide sequence ID" value="NM_180704.2"/>
</dbReference>
<dbReference type="SMR" id="F4K410"/>
<dbReference type="FunCoup" id="F4K410">
    <property type="interactions" value="757"/>
</dbReference>
<dbReference type="STRING" id="3702.F4K410"/>
<dbReference type="iPTMnet" id="F4K410"/>
<dbReference type="PaxDb" id="3702-AT5G13650.2"/>
<dbReference type="ProteomicsDB" id="226788">
    <molecule id="F4K410-1"/>
</dbReference>
<dbReference type="EnsemblPlants" id="AT5G13650.1">
    <molecule id="F4K410-1"/>
    <property type="protein sequence ID" value="AT5G13650.1"/>
    <property type="gene ID" value="AT5G13650"/>
</dbReference>
<dbReference type="GeneID" id="831209"/>
<dbReference type="Gramene" id="AT5G13650.1">
    <molecule id="F4K410-1"/>
    <property type="protein sequence ID" value="AT5G13650.1"/>
    <property type="gene ID" value="AT5G13650"/>
</dbReference>
<dbReference type="KEGG" id="ath:AT5G13650"/>
<dbReference type="Araport" id="AT5G13650"/>
<dbReference type="TAIR" id="AT5G13650">
    <property type="gene designation" value="SVR3"/>
</dbReference>
<dbReference type="eggNOG" id="KOG0462">
    <property type="taxonomic scope" value="Eukaryota"/>
</dbReference>
<dbReference type="HOGENOM" id="CLU_017016_4_0_1"/>
<dbReference type="InParanoid" id="F4K410"/>
<dbReference type="OMA" id="MEVYKGQ"/>
<dbReference type="OrthoDB" id="364892at2759"/>
<dbReference type="PRO" id="PR:F4K410"/>
<dbReference type="Proteomes" id="UP000006548">
    <property type="component" value="Chromosome 5"/>
</dbReference>
<dbReference type="ExpressionAtlas" id="F4K410">
    <property type="expression patterns" value="baseline and differential"/>
</dbReference>
<dbReference type="GO" id="GO:0009507">
    <property type="term" value="C:chloroplast"/>
    <property type="evidence" value="ECO:0000314"/>
    <property type="project" value="UniProtKB"/>
</dbReference>
<dbReference type="GO" id="GO:0005525">
    <property type="term" value="F:GTP binding"/>
    <property type="evidence" value="ECO:0007669"/>
    <property type="project" value="InterPro"/>
</dbReference>
<dbReference type="GO" id="GO:0003924">
    <property type="term" value="F:GTPase activity"/>
    <property type="evidence" value="ECO:0007669"/>
    <property type="project" value="InterPro"/>
</dbReference>
<dbReference type="GO" id="GO:0003746">
    <property type="term" value="F:translation elongation factor activity"/>
    <property type="evidence" value="ECO:0007669"/>
    <property type="project" value="UniProtKB-KW"/>
</dbReference>
<dbReference type="GO" id="GO:0050821">
    <property type="term" value="P:protein stabilization"/>
    <property type="evidence" value="ECO:0000315"/>
    <property type="project" value="UniProtKB"/>
</dbReference>
<dbReference type="GO" id="GO:0009409">
    <property type="term" value="P:response to cold"/>
    <property type="evidence" value="ECO:0000315"/>
    <property type="project" value="UniProtKB"/>
</dbReference>
<dbReference type="GO" id="GO:0006364">
    <property type="term" value="P:rRNA processing"/>
    <property type="evidence" value="ECO:0000315"/>
    <property type="project" value="UniProtKB"/>
</dbReference>
<dbReference type="CDD" id="cd16263">
    <property type="entry name" value="BipA_III"/>
    <property type="match status" value="1"/>
</dbReference>
<dbReference type="CDD" id="cd03710">
    <property type="entry name" value="BipA_TypA_C"/>
    <property type="match status" value="1"/>
</dbReference>
<dbReference type="CDD" id="cd03691">
    <property type="entry name" value="BipA_TypA_II"/>
    <property type="match status" value="1"/>
</dbReference>
<dbReference type="CDD" id="cd01891">
    <property type="entry name" value="TypA_BipA"/>
    <property type="match status" value="1"/>
</dbReference>
<dbReference type="FunFam" id="2.40.30.10:FF:000016">
    <property type="entry name" value="GTP-binding protein TypA"/>
    <property type="match status" value="1"/>
</dbReference>
<dbReference type="FunFam" id="2.40.50.250:FF:000001">
    <property type="entry name" value="GTP-binding protein TypA"/>
    <property type="match status" value="1"/>
</dbReference>
<dbReference type="FunFam" id="3.30.70.240:FF:000002">
    <property type="entry name" value="GTP-binding protein TypA"/>
    <property type="match status" value="1"/>
</dbReference>
<dbReference type="FunFam" id="3.30.70.870:FF:000003">
    <property type="entry name" value="GTP-binding protein TypA"/>
    <property type="match status" value="1"/>
</dbReference>
<dbReference type="FunFam" id="3.40.50.300:FF:000055">
    <property type="entry name" value="GTP-binding protein TypA"/>
    <property type="match status" value="1"/>
</dbReference>
<dbReference type="Gene3D" id="3.30.70.240">
    <property type="match status" value="1"/>
</dbReference>
<dbReference type="Gene3D" id="2.40.50.250">
    <property type="entry name" value="bipa protein"/>
    <property type="match status" value="1"/>
</dbReference>
<dbReference type="Gene3D" id="3.30.70.870">
    <property type="entry name" value="Elongation Factor G (Translational Gtpase), domain 3"/>
    <property type="match status" value="1"/>
</dbReference>
<dbReference type="Gene3D" id="3.40.50.300">
    <property type="entry name" value="P-loop containing nucleotide triphosphate hydrolases"/>
    <property type="match status" value="1"/>
</dbReference>
<dbReference type="Gene3D" id="2.40.30.10">
    <property type="entry name" value="Translation factors"/>
    <property type="match status" value="1"/>
</dbReference>
<dbReference type="InterPro" id="IPR006298">
    <property type="entry name" value="BipA"/>
</dbReference>
<dbReference type="InterPro" id="IPR048876">
    <property type="entry name" value="BipA_C"/>
</dbReference>
<dbReference type="InterPro" id="IPR047041">
    <property type="entry name" value="BipA_GTP-bd_dom"/>
</dbReference>
<dbReference type="InterPro" id="IPR047042">
    <property type="entry name" value="BipA_II"/>
</dbReference>
<dbReference type="InterPro" id="IPR047043">
    <property type="entry name" value="BipA_III"/>
</dbReference>
<dbReference type="InterPro" id="IPR035651">
    <property type="entry name" value="BipA_V"/>
</dbReference>
<dbReference type="InterPro" id="IPR035647">
    <property type="entry name" value="EFG_III/V"/>
</dbReference>
<dbReference type="InterPro" id="IPR000640">
    <property type="entry name" value="EFG_V-like"/>
</dbReference>
<dbReference type="InterPro" id="IPR004161">
    <property type="entry name" value="EFTu-like_2"/>
</dbReference>
<dbReference type="InterPro" id="IPR031157">
    <property type="entry name" value="G_TR_CS"/>
</dbReference>
<dbReference type="InterPro" id="IPR027417">
    <property type="entry name" value="P-loop_NTPase"/>
</dbReference>
<dbReference type="InterPro" id="IPR005225">
    <property type="entry name" value="Small_GTP-bd"/>
</dbReference>
<dbReference type="InterPro" id="IPR000795">
    <property type="entry name" value="T_Tr_GTP-bd_dom"/>
</dbReference>
<dbReference type="InterPro" id="IPR009000">
    <property type="entry name" value="Transl_B-barrel_sf"/>
</dbReference>
<dbReference type="InterPro" id="IPR042116">
    <property type="entry name" value="TypA/BipA_C"/>
</dbReference>
<dbReference type="NCBIfam" id="TIGR00231">
    <property type="entry name" value="small_GTP"/>
    <property type="match status" value="1"/>
</dbReference>
<dbReference type="NCBIfam" id="TIGR01394">
    <property type="entry name" value="TypA_BipA"/>
    <property type="match status" value="1"/>
</dbReference>
<dbReference type="PANTHER" id="PTHR42908:SF8">
    <property type="entry name" value="TR-TYPE G DOMAIN-CONTAINING PROTEIN"/>
    <property type="match status" value="1"/>
</dbReference>
<dbReference type="PANTHER" id="PTHR42908">
    <property type="entry name" value="TRANSLATION ELONGATION FACTOR-RELATED"/>
    <property type="match status" value="1"/>
</dbReference>
<dbReference type="Pfam" id="PF21018">
    <property type="entry name" value="BipA_C"/>
    <property type="match status" value="1"/>
</dbReference>
<dbReference type="Pfam" id="PF00679">
    <property type="entry name" value="EFG_C"/>
    <property type="match status" value="1"/>
</dbReference>
<dbReference type="Pfam" id="PF00009">
    <property type="entry name" value="GTP_EFTU"/>
    <property type="match status" value="1"/>
</dbReference>
<dbReference type="Pfam" id="PF03144">
    <property type="entry name" value="GTP_EFTU_D2"/>
    <property type="match status" value="1"/>
</dbReference>
<dbReference type="PRINTS" id="PR00315">
    <property type="entry name" value="ELONGATNFCT"/>
</dbReference>
<dbReference type="SMART" id="SM00838">
    <property type="entry name" value="EFG_C"/>
    <property type="match status" value="1"/>
</dbReference>
<dbReference type="SUPFAM" id="SSF54980">
    <property type="entry name" value="EF-G C-terminal domain-like"/>
    <property type="match status" value="2"/>
</dbReference>
<dbReference type="SUPFAM" id="SSF52540">
    <property type="entry name" value="P-loop containing nucleoside triphosphate hydrolases"/>
    <property type="match status" value="1"/>
</dbReference>
<dbReference type="SUPFAM" id="SSF50447">
    <property type="entry name" value="Translation proteins"/>
    <property type="match status" value="1"/>
</dbReference>
<dbReference type="PROSITE" id="PS00301">
    <property type="entry name" value="G_TR_1"/>
    <property type="match status" value="1"/>
</dbReference>
<dbReference type="PROSITE" id="PS51722">
    <property type="entry name" value="G_TR_2"/>
    <property type="match status" value="1"/>
</dbReference>
<protein>
    <recommendedName>
        <fullName>Putative elongation factor TypA-like SVR3, chloroplastic</fullName>
    </recommendedName>
    <alternativeName>
        <fullName evidence="7">Protein HAPPY ON NORFLURAZON 23</fullName>
    </alternativeName>
    <alternativeName>
        <fullName evidence="6">Protein SUPPRESSOR OF VARIEGATION 3</fullName>
    </alternativeName>
</protein>
<accession>F4K410</accession>
<accession>Q93Y02</accession>
<accession>Q9FNA8</accession>
<evidence type="ECO:0000255" key="1"/>
<evidence type="ECO:0000255" key="2">
    <source>
        <dbReference type="PROSITE-ProRule" id="PRU01059"/>
    </source>
</evidence>
<evidence type="ECO:0000256" key="3">
    <source>
        <dbReference type="SAM" id="MobiDB-lite"/>
    </source>
</evidence>
<evidence type="ECO:0000269" key="4">
    <source>
    </source>
</evidence>
<evidence type="ECO:0000269" key="5">
    <source>
    </source>
</evidence>
<evidence type="ECO:0000303" key="6">
    <source>
    </source>
</evidence>
<evidence type="ECO:0000303" key="7">
    <source>
    </source>
</evidence>
<evidence type="ECO:0000305" key="8"/>
<evidence type="ECO:0000312" key="9">
    <source>
        <dbReference type="Araport" id="AT5G13650"/>
    </source>
</evidence>
<evidence type="ECO:0000312" key="10">
    <source>
        <dbReference type="EMBL" id="BAB08691.1"/>
    </source>
</evidence>
<organism>
    <name type="scientific">Arabidopsis thaliana</name>
    <name type="common">Mouse-ear cress</name>
    <dbReference type="NCBI Taxonomy" id="3702"/>
    <lineage>
        <taxon>Eukaryota</taxon>
        <taxon>Viridiplantae</taxon>
        <taxon>Streptophyta</taxon>
        <taxon>Embryophyta</taxon>
        <taxon>Tracheophyta</taxon>
        <taxon>Spermatophyta</taxon>
        <taxon>Magnoliopsida</taxon>
        <taxon>eudicotyledons</taxon>
        <taxon>Gunneridae</taxon>
        <taxon>Pentapetalae</taxon>
        <taxon>rosids</taxon>
        <taxon>malvids</taxon>
        <taxon>Brassicales</taxon>
        <taxon>Brassicaceae</taxon>
        <taxon>Camelineae</taxon>
        <taxon>Arabidopsis</taxon>
    </lineage>
</organism>
<gene>
    <name type="primary">SVR3</name>
    <name evidence="9" type="ordered locus">At5g13650</name>
    <name evidence="10" type="ORF">MSH12.11</name>
</gene>
<proteinExistence type="evidence at protein level"/>
<reference key="1">
    <citation type="journal article" date="1997" name="DNA Res.">
        <title>Structural analysis of Arabidopsis thaliana chromosome 5. II. Sequence features of the regions of 1,044,062 bp covered by thirteen physically assigned P1 clones.</title>
        <authorList>
            <person name="Kotani H."/>
            <person name="Nakamura Y."/>
            <person name="Sato S."/>
            <person name="Kaneko T."/>
            <person name="Asamizu E."/>
            <person name="Miyajima N."/>
            <person name="Tabata S."/>
        </authorList>
    </citation>
    <scope>NUCLEOTIDE SEQUENCE [LARGE SCALE GENOMIC DNA]</scope>
    <source>
        <strain>cv. Columbia</strain>
    </source>
</reference>
<reference key="2">
    <citation type="journal article" date="2017" name="Plant J.">
        <title>Araport11: a complete reannotation of the Arabidopsis thaliana reference genome.</title>
        <authorList>
            <person name="Cheng C.Y."/>
            <person name="Krishnakumar V."/>
            <person name="Chan A.P."/>
            <person name="Thibaud-Nissen F."/>
            <person name="Schobel S."/>
            <person name="Town C.D."/>
        </authorList>
    </citation>
    <scope>GENOME REANNOTATION</scope>
    <source>
        <strain>cv. Columbia</strain>
    </source>
</reference>
<reference key="3">
    <citation type="journal article" date="2003" name="Science">
        <title>Empirical analysis of transcriptional activity in the Arabidopsis genome.</title>
        <authorList>
            <person name="Yamada K."/>
            <person name="Lim J."/>
            <person name="Dale J.M."/>
            <person name="Chen H."/>
            <person name="Shinn P."/>
            <person name="Palm C.J."/>
            <person name="Southwick A.M."/>
            <person name="Wu H.C."/>
            <person name="Kim C.J."/>
            <person name="Nguyen M."/>
            <person name="Pham P.K."/>
            <person name="Cheuk R.F."/>
            <person name="Karlin-Newmann G."/>
            <person name="Liu S.X."/>
            <person name="Lam B."/>
            <person name="Sakano H."/>
            <person name="Wu T."/>
            <person name="Yu G."/>
            <person name="Miranda M."/>
            <person name="Quach H.L."/>
            <person name="Tripp M."/>
            <person name="Chang C.H."/>
            <person name="Lee J.M."/>
            <person name="Toriumi M.J."/>
            <person name="Chan M.M."/>
            <person name="Tang C.C."/>
            <person name="Onodera C.S."/>
            <person name="Deng J.M."/>
            <person name="Akiyama K."/>
            <person name="Ansari Y."/>
            <person name="Arakawa T."/>
            <person name="Banh J."/>
            <person name="Banno F."/>
            <person name="Bowser L."/>
            <person name="Brooks S.Y."/>
            <person name="Carninci P."/>
            <person name="Chao Q."/>
            <person name="Choy N."/>
            <person name="Enju A."/>
            <person name="Goldsmith A.D."/>
            <person name="Gurjal M."/>
            <person name="Hansen N.F."/>
            <person name="Hayashizaki Y."/>
            <person name="Johnson-Hopson C."/>
            <person name="Hsuan V.W."/>
            <person name="Iida K."/>
            <person name="Karnes M."/>
            <person name="Khan S."/>
            <person name="Koesema E."/>
            <person name="Ishida J."/>
            <person name="Jiang P.X."/>
            <person name="Jones T."/>
            <person name="Kawai J."/>
            <person name="Kamiya A."/>
            <person name="Meyers C."/>
            <person name="Nakajima M."/>
            <person name="Narusaka M."/>
            <person name="Seki M."/>
            <person name="Sakurai T."/>
            <person name="Satou M."/>
            <person name="Tamse R."/>
            <person name="Vaysberg M."/>
            <person name="Wallender E.K."/>
            <person name="Wong C."/>
            <person name="Yamamura Y."/>
            <person name="Yuan S."/>
            <person name="Shinozaki K."/>
            <person name="Davis R.W."/>
            <person name="Theologis A."/>
            <person name="Ecker J.R."/>
        </authorList>
    </citation>
    <scope>NUCLEOTIDE SEQUENCE [LARGE SCALE MRNA] OF 240-675 AND 284-675</scope>
    <source>
        <strain>cv. Columbia</strain>
    </source>
</reference>
<reference key="4">
    <citation type="journal article" date="2010" name="BMC Plant Biol.">
        <title>A var2 leaf variegation suppressor locus, SUPPRESSOR OF VARIEGATION3, encodes a putative chloroplast translation elongation factor that is important for chloroplast development in the cold.</title>
        <authorList>
            <person name="Liu X."/>
            <person name="Rodermel S.R."/>
            <person name="Yu F."/>
        </authorList>
    </citation>
    <scope>FUNCTION</scope>
    <scope>SUBCELLULAR LOCATION</scope>
    <scope>DISRUPTION PHENOTYPE</scope>
</reference>
<reference key="5">
    <citation type="journal article" date="2011" name="Plant J.">
        <title>'happy on norflurazon' (hon) mutations implicate perturbance of plastid homeostasis with activating stress acclimatization and changing nuclear gene expression in norflurazon-treated seedlings.</title>
        <authorList>
            <person name="Saini G."/>
            <person name="Meskauskiene R."/>
            <person name="Pijacka W."/>
            <person name="Roszak P."/>
            <person name="Sjoegren L.L."/>
            <person name="Clarke A.K."/>
            <person name="Straus M."/>
            <person name="Apel K."/>
        </authorList>
    </citation>
    <scope>FUNCTION</scope>
    <scope>MUTAGENESIS OF ARG-438</scope>
</reference>
<keyword id="KW-0025">Alternative splicing</keyword>
<keyword id="KW-0150">Chloroplast</keyword>
<keyword id="KW-0251">Elongation factor</keyword>
<keyword id="KW-0934">Plastid</keyword>
<keyword id="KW-0648">Protein biosynthesis</keyword>
<keyword id="KW-1185">Reference proteome</keyword>
<keyword id="KW-0346">Stress response</keyword>
<keyword id="KW-0809">Transit peptide</keyword>
<name>SVR3_ARATH</name>
<feature type="transit peptide" description="Chloroplast" evidence="8">
    <location>
        <begin position="1"/>
        <end position="58"/>
    </location>
</feature>
<feature type="chain" id="PRO_0000439379" description="Putative elongation factor TypA-like SVR3, chloroplastic" evidence="1">
    <location>
        <begin position="59"/>
        <end position="675"/>
    </location>
</feature>
<feature type="domain" description="tr-type G" evidence="2">
    <location>
        <begin position="80"/>
        <end position="275"/>
    </location>
</feature>
<feature type="region of interest" description="Disordered" evidence="3">
    <location>
        <begin position="43"/>
        <end position="76"/>
    </location>
</feature>
<feature type="compositionally biased region" description="Low complexity" evidence="3">
    <location>
        <begin position="59"/>
        <end position="68"/>
    </location>
</feature>
<feature type="mutagenesis site" description="In hon23; tolerance to norflurazon, an inhibitor of phytoene desaturase." evidence="5">
    <original>R</original>
    <variation>H</variation>
    <location>
        <position position="438"/>
    </location>
</feature>
<comment type="function">
    <text evidence="4 5">Putative chloroplastic elongation factor involved in response to chilling stress. Required for proper chloroplast rRNA processing and/or translation at low temperature (PubMed:21187014). Involved in plastid protein homeostasis (PubMed:21208309).</text>
</comment>
<comment type="subcellular location">
    <subcellularLocation>
        <location evidence="4">Plastid</location>
        <location evidence="4">Chloroplast</location>
    </subcellularLocation>
</comment>
<comment type="alternative products">
    <event type="alternative splicing"/>
    <isoform>
        <id>F4K410-1</id>
        <name>1</name>
        <sequence type="displayed"/>
    </isoform>
    <text evidence="8">A number of isoforms are produced. According to EST sequences.</text>
</comment>
<comment type="disruption phenotype">
    <text evidence="4">Reduced plant growth, pale-green leaves with reduced levels of chlorophyll. Chilling-sensitive phenotype.</text>
</comment>
<comment type="similarity">
    <text evidence="8">Belongs to the TRAFAC class translation factor GTPase superfamily. Classic translation factor GTPase family. BipA subfamily.</text>
</comment>
<comment type="sequence caution" evidence="8">
    <conflict type="erroneous initiation">
        <sequence resource="EMBL-CDS" id="AAL24425"/>
    </conflict>
    <text>Truncated N-terminus.</text>
</comment>
<comment type="sequence caution" evidence="8">
    <conflict type="erroneous gene model prediction">
        <sequence resource="EMBL-CDS" id="BAB08691"/>
    </conflict>
</comment>